<comment type="function">
    <text evidence="3">Inhibits the enzymatic activity of the phospholipase A2 (PLA2).</text>
</comment>
<comment type="subunit">
    <text evidence="6">Heteromer composed of subunit A and subunit B.</text>
</comment>
<comment type="subcellular location">
    <subcellularLocation>
        <location evidence="3">Secreted</location>
    </subcellularLocation>
    <text evidence="3">Secreted in blood plasma.</text>
</comment>
<comment type="miscellaneous">
    <text evidence="3">Concentration of this protein in the serum is 8-fold lower than in the E.quadrivirgata (another non-venomous snake) serum. This difference may reflect the difference in the food habits of these snakes. E.quadrivirgata preys upon snakes including the venomous snakes, whereas E.climacophora only preys upon small mammals and birds.</text>
</comment>
<comment type="similarity">
    <text evidence="5">Belongs to the CNF-like-inhibitor family.</text>
</comment>
<protein>
    <recommendedName>
        <fullName evidence="4">Phospholipase A2 inhibitor gamma subunit B</fullName>
    </recommendedName>
    <alternativeName>
        <fullName>PLI-gamma B</fullName>
    </alternativeName>
    <alternativeName>
        <fullName evidence="4">gamma-PLI B</fullName>
    </alternativeName>
</protein>
<reference key="1">
    <citation type="journal article" date="2009" name="Toxicon">
        <title>Identification and characterization of phospholipase A2 inhibitors from the serum of the Japanese rat snake, Elaphe climacophora.</title>
        <authorList>
            <person name="Shirai R."/>
            <person name="Toriba M."/>
            <person name="Hayashi K."/>
            <person name="Ikeda K."/>
            <person name="Inoue S."/>
        </authorList>
    </citation>
    <scope>NUCLEOTIDE SEQUENCE [MRNA]</scope>
    <scope>PROTEIN SEQUENCE OF 20-24</scope>
    <scope>SUBCELLULAR LOCATION</scope>
    <scope>SUBUNIT</scope>
    <source>
        <tissue>Liver</tissue>
        <tissue>Serum</tissue>
    </source>
</reference>
<keyword id="KW-0903">Direct protein sequencing</keyword>
<keyword id="KW-1015">Disulfide bond</keyword>
<keyword id="KW-0593">Phospholipase A2 inhibitor</keyword>
<keyword id="KW-0964">Secreted</keyword>
<keyword id="KW-0732">Signal</keyword>
<evidence type="ECO:0000250" key="1">
    <source>
        <dbReference type="UniProtKB" id="Q7LZI1"/>
    </source>
</evidence>
<evidence type="ECO:0000255" key="2"/>
<evidence type="ECO:0000269" key="3">
    <source>
    </source>
</evidence>
<evidence type="ECO:0000303" key="4">
    <source>
    </source>
</evidence>
<evidence type="ECO:0000305" key="5"/>
<evidence type="ECO:0000305" key="6">
    <source>
    </source>
</evidence>
<name>PLIGB_ELACL</name>
<sequence>MKFLLFCCLFGTFLATGMCIDCEHCVVWGQNCTGWKETCGENEDTCVTYQTEVIRPPLSITFTAKTCGTSDTCHLDYVEANPHNELTLRAKRACCTGDECQTLPPPVLEPQVNRPNGLQCPGCIGLTSTECNEYLVSCQGSENQCLTIILKKPDFSLSEMSFKGCASENLCLLFEKKFWRFLEASEVDVKCTPAVPQTSQ</sequence>
<feature type="signal peptide" evidence="2">
    <location>
        <begin position="1"/>
        <end position="19"/>
    </location>
</feature>
<feature type="chain" id="PRO_5002901919" description="Phospholipase A2 inhibitor gamma subunit B">
    <location>
        <begin position="20"/>
        <end position="200"/>
    </location>
</feature>
<feature type="disulfide bond" evidence="1">
    <location>
        <begin position="22"/>
        <end position="46"/>
    </location>
</feature>
<feature type="disulfide bond" evidence="1">
    <location>
        <begin position="25"/>
        <end position="32"/>
    </location>
</feature>
<feature type="disulfide bond" evidence="1">
    <location>
        <begin position="39"/>
        <end position="67"/>
    </location>
</feature>
<feature type="disulfide bond" evidence="1">
    <location>
        <begin position="73"/>
        <end position="94"/>
    </location>
</feature>
<feature type="disulfide bond" evidence="1">
    <location>
        <begin position="95"/>
        <end position="100"/>
    </location>
</feature>
<feature type="disulfide bond" evidence="1">
    <location>
        <begin position="120"/>
        <end position="145"/>
    </location>
</feature>
<feature type="disulfide bond" evidence="1">
    <location>
        <begin position="138"/>
        <end position="165"/>
    </location>
</feature>
<feature type="disulfide bond" evidence="5">
    <location>
        <begin position="171"/>
        <end position="191"/>
    </location>
</feature>
<proteinExistence type="evidence at protein level"/>
<dbReference type="EMBL" id="AB462513">
    <property type="protein sequence ID" value="BAH47551.1"/>
    <property type="molecule type" value="mRNA"/>
</dbReference>
<dbReference type="GO" id="GO:0005576">
    <property type="term" value="C:extracellular region"/>
    <property type="evidence" value="ECO:0007669"/>
    <property type="project" value="UniProtKB-SubCell"/>
</dbReference>
<dbReference type="GO" id="GO:0019834">
    <property type="term" value="F:phospholipase A2 inhibitor activity"/>
    <property type="evidence" value="ECO:0007669"/>
    <property type="project" value="UniProtKB-KW"/>
</dbReference>
<dbReference type="CDD" id="cd23572">
    <property type="entry name" value="TFP_LU_ECD_PINLYP_rpt2"/>
    <property type="match status" value="1"/>
</dbReference>
<dbReference type="CDD" id="cd23630">
    <property type="entry name" value="TFP_LU_ECD_PLIGB"/>
    <property type="match status" value="1"/>
</dbReference>
<dbReference type="Gene3D" id="2.10.60.10">
    <property type="entry name" value="CD59"/>
    <property type="match status" value="1"/>
</dbReference>
<dbReference type="InterPro" id="IPR050918">
    <property type="entry name" value="CNF-like_PLA2_Inhibitor"/>
</dbReference>
<dbReference type="InterPro" id="IPR016054">
    <property type="entry name" value="LY6_UPA_recep-like"/>
</dbReference>
<dbReference type="InterPro" id="IPR016338">
    <property type="entry name" value="PLipase_A2-inh_b-type"/>
</dbReference>
<dbReference type="InterPro" id="IPR004126">
    <property type="entry name" value="PLipase_A2_inh_N"/>
</dbReference>
<dbReference type="InterPro" id="IPR045860">
    <property type="entry name" value="Snake_toxin-like_sf"/>
</dbReference>
<dbReference type="PANTHER" id="PTHR20914">
    <property type="entry name" value="LY6/PLAUR DOMAIN-CONTAINING PROTEIN 8"/>
    <property type="match status" value="1"/>
</dbReference>
<dbReference type="PANTHER" id="PTHR20914:SF30">
    <property type="entry name" value="LY6_PLAUR DOMAIN CONTAINING 9"/>
    <property type="match status" value="1"/>
</dbReference>
<dbReference type="Pfam" id="PF02988">
    <property type="entry name" value="PLA2_inh"/>
    <property type="match status" value="1"/>
</dbReference>
<dbReference type="Pfam" id="PF00021">
    <property type="entry name" value="UPAR_LY6"/>
    <property type="match status" value="1"/>
</dbReference>
<dbReference type="PIRSF" id="PIRSF002023">
    <property type="entry name" value="PLA2_inhib_alpha/gamma"/>
    <property type="match status" value="1"/>
</dbReference>
<dbReference type="SUPFAM" id="SSF57302">
    <property type="entry name" value="Snake toxin-like"/>
    <property type="match status" value="2"/>
</dbReference>
<organism>
    <name type="scientific">Elaphe climacophora</name>
    <name type="common">Japanese rat snake</name>
    <name type="synonym">Coluber climacophorus</name>
    <dbReference type="NCBI Taxonomy" id="31143"/>
    <lineage>
        <taxon>Eukaryota</taxon>
        <taxon>Metazoa</taxon>
        <taxon>Chordata</taxon>
        <taxon>Craniata</taxon>
        <taxon>Vertebrata</taxon>
        <taxon>Euteleostomi</taxon>
        <taxon>Lepidosauria</taxon>
        <taxon>Squamata</taxon>
        <taxon>Bifurcata</taxon>
        <taxon>Unidentata</taxon>
        <taxon>Episquamata</taxon>
        <taxon>Toxicofera</taxon>
        <taxon>Serpentes</taxon>
        <taxon>Colubroidea</taxon>
        <taxon>Colubridae</taxon>
        <taxon>Colubrinae</taxon>
        <taxon>Elaphe</taxon>
    </lineage>
</organism>
<accession>C0STK9</accession>